<gene>
    <name type="primary">COX1</name>
    <name type="synonym">COI</name>
    <name type="synonym">COXI</name>
</gene>
<comment type="function">
    <text evidence="2">Component of the cytochrome c oxidase, the last enzyme in the mitochondrial electron transport chain which drives oxidative phosphorylation. The respiratory chain contains 3 multisubunit complexes succinate dehydrogenase (complex II, CII), ubiquinol-cytochrome c oxidoreductase (cytochrome b-c1 complex, complex III, CIII) and cytochrome c oxidase (complex IV, CIV), that cooperate to transfer electrons derived from NADH and succinate to molecular oxygen, creating an electrochemical gradient over the inner membrane that drives transmembrane transport and the ATP synthase. Cytochrome c oxidase is the component of the respiratory chain that catalyzes the reduction of oxygen to water. Electrons originating from reduced cytochrome c in the intermembrane space (IMS) are transferred via the dinuclear copper A center (CU(A)) of subunit 2 and heme A of subunit 1 to the active site in subunit 1, a binuclear center (BNC) formed by heme A3 and copper B (CU(B)). The BNC reduces molecular oxygen to 2 water molecules using 4 electrons from cytochrome c in the IMS and 4 protons from the mitochondrial matrix.</text>
</comment>
<comment type="catalytic activity">
    <reaction evidence="2">
        <text>4 Fe(II)-[cytochrome c] + O2 + 8 H(+)(in) = 4 Fe(III)-[cytochrome c] + 2 H2O + 4 H(+)(out)</text>
        <dbReference type="Rhea" id="RHEA:11436"/>
        <dbReference type="Rhea" id="RHEA-COMP:10350"/>
        <dbReference type="Rhea" id="RHEA-COMP:14399"/>
        <dbReference type="ChEBI" id="CHEBI:15377"/>
        <dbReference type="ChEBI" id="CHEBI:15378"/>
        <dbReference type="ChEBI" id="CHEBI:15379"/>
        <dbReference type="ChEBI" id="CHEBI:29033"/>
        <dbReference type="ChEBI" id="CHEBI:29034"/>
        <dbReference type="EC" id="7.1.1.9"/>
    </reaction>
    <physiologicalReaction direction="left-to-right" evidence="2">
        <dbReference type="Rhea" id="RHEA:11437"/>
    </physiologicalReaction>
</comment>
<comment type="cofactor">
    <cofactor evidence="2">
        <name>heme</name>
        <dbReference type="ChEBI" id="CHEBI:30413"/>
    </cofactor>
    <text evidence="2">Binds 2 heme A groups non-covalently per subunit.</text>
</comment>
<comment type="cofactor">
    <cofactor evidence="2">
        <name>Cu cation</name>
        <dbReference type="ChEBI" id="CHEBI:23378"/>
    </cofactor>
    <text evidence="2">Binds a copper B center.</text>
</comment>
<comment type="pathway">
    <text evidence="2">Energy metabolism; oxidative phosphorylation.</text>
</comment>
<comment type="subunit">
    <text evidence="2">Component of the cytochrome c oxidase (complex IV, CIV), a multisubunit enzyme composed of a catalytic core of 3 subunits and several supernumerary subunits. The complex exists as a monomer or a dimer and forms supercomplexes (SCs) in the inner mitochondrial membrane with ubiquinol-cytochrome c oxidoreductase (cytochrome b-c1 complex, complex III, CIII).</text>
</comment>
<comment type="subcellular location">
    <subcellularLocation>
        <location evidence="2">Mitochondrion inner membrane</location>
        <topology evidence="2">Multi-pass membrane protein</topology>
    </subcellularLocation>
</comment>
<comment type="similarity">
    <text evidence="4">Belongs to the heme-copper respiratory oxidase family.</text>
</comment>
<sequence>MTNMVRWLFSTNHKDIGTLYFIFGAIAGVMGTCFSVLIRMELARPGDQILGGNHQLYNVLITAHAFLMIFFMVMPAMIGGFGNWFVPILIGAPDMAFPRLNNISFWLLPPSLLLLLSSALVEVGSGTGWTVYPPLSGITSHSGGAVDLAIFSLHLSGISSILGSINFITTIFNMRGPGMTMHRLPLFVWSVLVTAFLLLLSLPVLAGAITMLLTDRNFNTTFFDPAGGGDPILYQHLFWFFGHPEVYILILPGFGIISHIVSTFSRKPVFGYLGMVYAMISIGVLGFLVWAHHMFTVGLDVDTRAYFTAATMIIAVPTGIKIFSWIATMWGGSIQYKTPMLFAVGFIFLFTIGGLTGIVLANSGLDIALHDTYYVVAHFHYVLSMGAVFALFAGFYYWVGKIFGRTYPETLGQIHFWITFFGVNLTFFPMHFLGLSGMPRRIPDYPDAYAGWNALSSFGSYISVVGIRRFFVVVAITSSSGKNQKCAESPWAVEQNPTTLEWLVQSPPAFHTFGELPAVKETKS</sequence>
<protein>
    <recommendedName>
        <fullName>Cytochrome c oxidase subunit 1</fullName>
        <ecNumber>7.1.1.9</ecNumber>
    </recommendedName>
    <alternativeName>
        <fullName>Cytochrome c oxidase polypeptide I</fullName>
    </alternativeName>
</protein>
<evidence type="ECO:0000250" key="1">
    <source>
        <dbReference type="UniProtKB" id="P00396"/>
    </source>
</evidence>
<evidence type="ECO:0000250" key="2">
    <source>
        <dbReference type="UniProtKB" id="P00401"/>
    </source>
</evidence>
<evidence type="ECO:0000255" key="3"/>
<evidence type="ECO:0000305" key="4"/>
<dbReference type="EC" id="7.1.1.9"/>
<dbReference type="EMBL" id="Y00417">
    <property type="protein sequence ID" value="CAA68474.1"/>
    <property type="molecule type" value="Genomic_DNA"/>
</dbReference>
<dbReference type="EMBL" id="X56186">
    <property type="protein sequence ID" value="CAA39651.1"/>
    <property type="molecule type" value="Genomic_DNA"/>
</dbReference>
<dbReference type="PIR" id="S16256">
    <property type="entry name" value="S16256"/>
</dbReference>
<dbReference type="RefSeq" id="YP_398419.1">
    <property type="nucleotide sequence ID" value="NC_007579.1"/>
</dbReference>
<dbReference type="SMR" id="P68539"/>
<dbReference type="PaxDb" id="4565-EPlTAEP00000010117"/>
<dbReference type="EnsemblPlants" id="TraesKAR2A01G0435720.1">
    <property type="protein sequence ID" value="cds.TraesKAR2A01G0435720.1"/>
    <property type="gene ID" value="TraesKAR2A01G0435720"/>
</dbReference>
<dbReference type="EnsemblPlants" id="TraesKAR5D01G0220810.1">
    <property type="protein sequence ID" value="cds.TraesKAR5D01G0220810.1"/>
    <property type="gene ID" value="TraesKAR5D01G0220810"/>
</dbReference>
<dbReference type="EnsemblPlants" id="TraesKAR7A01G0409700.1">
    <property type="protein sequence ID" value="cds.TraesKAR7A01G0409700.1"/>
    <property type="gene ID" value="TraesKAR7A01G0409700"/>
</dbReference>
<dbReference type="EnsemblPlants" id="TraesKARUn01G0057720.1">
    <property type="protein sequence ID" value="cds.TraesKARUn01G0057720.1"/>
    <property type="gene ID" value="TraesKARUn01G0057720"/>
</dbReference>
<dbReference type="EnsemblPlants" id="TraesKARUn01G0065300.1">
    <property type="protein sequence ID" value="cds.TraesKARUn01G0065300.1"/>
    <property type="gene ID" value="TraesKARUn01G0065300"/>
</dbReference>
<dbReference type="EnsemblPlants" id="TraesKARUn01G0067800.1">
    <property type="protein sequence ID" value="cds.TraesKARUn01G0067800.1"/>
    <property type="gene ID" value="TraesKARUn01G0067800"/>
</dbReference>
<dbReference type="EnsemblPlants" id="TraesKARUn01G0099000.1">
    <property type="protein sequence ID" value="cds.TraesKARUn01G0099000.1"/>
    <property type="gene ID" value="TraesKARUn01G0099000"/>
</dbReference>
<dbReference type="EnsemblPlants" id="TraesKARUn01G0109320.1">
    <property type="protein sequence ID" value="cds.TraesKARUn01G0109320.1"/>
    <property type="gene ID" value="TraesKARUn01G0109320"/>
</dbReference>
<dbReference type="EnsemblPlants" id="TraesKARUn01G0109900.1">
    <property type="protein sequence ID" value="cds.TraesKARUn01G0109900.1"/>
    <property type="gene ID" value="TraesKARUn01G0109900"/>
</dbReference>
<dbReference type="EnsemblPlants" id="TraesKARUn01G0111310.1">
    <property type="protein sequence ID" value="cds.TraesKARUn01G0111310.1"/>
    <property type="gene ID" value="TraesKARUn01G0111310"/>
</dbReference>
<dbReference type="EnsemblPlants" id="TraesKARUn01G0121000.1">
    <property type="protein sequence ID" value="cds.TraesKARUn01G0121000.1"/>
    <property type="gene ID" value="TraesKARUn01G0121000"/>
</dbReference>
<dbReference type="EnsemblPlants" id="TraesKARUn01G0127660.1">
    <property type="protein sequence ID" value="cds.TraesKARUn01G0127660.1"/>
    <property type="gene ID" value="TraesKARUn01G0127660"/>
</dbReference>
<dbReference type="EnsemblPlants" id="TraesKARUn01G0136740.1">
    <property type="protein sequence ID" value="cds.TraesKARUn01G0136740.1"/>
    <property type="gene ID" value="TraesKARUn01G0136740"/>
</dbReference>
<dbReference type="EnsemblPlants" id="TraesKARUn01G0139280.1">
    <property type="protein sequence ID" value="cds.TraesKARUn01G0139280.1"/>
    <property type="gene ID" value="TraesKARUn01G0139280"/>
</dbReference>
<dbReference type="EnsemblPlants" id="TraesKARUn01G0139590.1">
    <property type="protein sequence ID" value="cds.TraesKARUn01G0139590.1"/>
    <property type="gene ID" value="TraesKARUn01G0139590"/>
</dbReference>
<dbReference type="EnsemblPlants" id="TraesKARUn01G0141330.1">
    <property type="protein sequence ID" value="cds.TraesKARUn01G0141330.1"/>
    <property type="gene ID" value="TraesKARUn01G0141330"/>
</dbReference>
<dbReference type="EnsemblPlants" id="TraesKARUn01G0144260.1">
    <property type="protein sequence ID" value="cds.TraesKARUn01G0144260.1"/>
    <property type="gene ID" value="TraesKARUn01G0144260"/>
</dbReference>
<dbReference type="EnsemblPlants" id="TraesKARUn01G0150480.1">
    <property type="protein sequence ID" value="cds.TraesKARUn01G0150480.1"/>
    <property type="gene ID" value="TraesKARUn01G0150480"/>
</dbReference>
<dbReference type="EnsemblPlants" id="TraesKARUn01G0155890.1">
    <property type="protein sequence ID" value="cds.TraesKARUn01G0155890.1"/>
    <property type="gene ID" value="TraesKARUn01G0155890"/>
</dbReference>
<dbReference type="EnsemblPlants" id="TraesKARUn01G0158060.1">
    <property type="protein sequence ID" value="cds.TraesKARUn01G0158060.1"/>
    <property type="gene ID" value="TraesKARUn01G0158060"/>
</dbReference>
<dbReference type="EnsemblPlants" id="TraesKARUn01G0194420.1">
    <property type="protein sequence ID" value="cds.TraesKARUn01G0194420.1"/>
    <property type="gene ID" value="TraesKARUn01G0194420"/>
</dbReference>
<dbReference type="EnsemblPlants" id="TraesPARA_EIv1.0_0377180.1">
    <property type="protein sequence ID" value="TraesPARA_EIv1.0_0377180.1.CDS1"/>
    <property type="gene ID" value="TraesPARA_EIv1.0_0377180"/>
</dbReference>
<dbReference type="EnsemblPlants" id="TraesPARA_EIv1.0_1811450.1">
    <property type="protein sequence ID" value="TraesPARA_EIv1.0_1811450.1.CDS1"/>
    <property type="gene ID" value="TraesPARA_EIv1.0_1811450"/>
</dbReference>
<dbReference type="EnsemblPlants" id="TraesPARA_EIv1.0_1811710.1">
    <property type="protein sequence ID" value="TraesPARA_EIv1.0_1811710.1.CDS1"/>
    <property type="gene ID" value="TraesPARA_EIv1.0_1811710"/>
</dbReference>
<dbReference type="EnsemblPlants" id="TraesPARA_EIv1.0_2333390.1">
    <property type="protein sequence ID" value="TraesPARA_EIv1.0_2333390.1.CDS1"/>
    <property type="gene ID" value="TraesPARA_EIv1.0_2333390"/>
</dbReference>
<dbReference type="EnsemblPlants" id="TraesPARA_EIv1.0_2673960.1">
    <property type="protein sequence ID" value="TraesPARA_EIv1.0_2673960.1.CDS1"/>
    <property type="gene ID" value="TraesPARA_EIv1.0_2673960"/>
</dbReference>
<dbReference type="EnsemblPlants" id="TraesPARA_EIv1.0_2678390.1">
    <property type="protein sequence ID" value="TraesPARA_EIv1.0_2678390.1.CDS1"/>
    <property type="gene ID" value="TraesPARA_EIv1.0_2678390"/>
</dbReference>
<dbReference type="EnsemblPlants" id="TraesRN5A0100807000.1">
    <property type="protein sequence ID" value="TraesRN5A0100807000.1"/>
    <property type="gene ID" value="TraesRN5A0100807000"/>
</dbReference>
<dbReference type="EnsemblPlants" id="TraesRN5A0100807100.1">
    <property type="protein sequence ID" value="TraesRN5A0100807100.1"/>
    <property type="gene ID" value="TraesRN5A0100807100"/>
</dbReference>
<dbReference type="Gramene" id="TraesKAR2A01G0435720.1">
    <property type="protein sequence ID" value="cds.TraesKAR2A01G0435720.1"/>
    <property type="gene ID" value="TraesKAR2A01G0435720"/>
</dbReference>
<dbReference type="Gramene" id="TraesKAR5D01G0220810.1">
    <property type="protein sequence ID" value="cds.TraesKAR5D01G0220810.1"/>
    <property type="gene ID" value="TraesKAR5D01G0220810"/>
</dbReference>
<dbReference type="Gramene" id="TraesKAR7A01G0409700.1">
    <property type="protein sequence ID" value="cds.TraesKAR7A01G0409700.1"/>
    <property type="gene ID" value="TraesKAR7A01G0409700"/>
</dbReference>
<dbReference type="Gramene" id="TraesKARUn01G0057720.1">
    <property type="protein sequence ID" value="cds.TraesKARUn01G0057720.1"/>
    <property type="gene ID" value="TraesKARUn01G0057720"/>
</dbReference>
<dbReference type="Gramene" id="TraesKARUn01G0065300.1">
    <property type="protein sequence ID" value="cds.TraesKARUn01G0065300.1"/>
    <property type="gene ID" value="TraesKARUn01G0065300"/>
</dbReference>
<dbReference type="Gramene" id="TraesKARUn01G0067800.1">
    <property type="protein sequence ID" value="cds.TraesKARUn01G0067800.1"/>
    <property type="gene ID" value="TraesKARUn01G0067800"/>
</dbReference>
<dbReference type="Gramene" id="TraesKARUn01G0099000.1">
    <property type="protein sequence ID" value="cds.TraesKARUn01G0099000.1"/>
    <property type="gene ID" value="TraesKARUn01G0099000"/>
</dbReference>
<dbReference type="Gramene" id="TraesKARUn01G0109320.1">
    <property type="protein sequence ID" value="cds.TraesKARUn01G0109320.1"/>
    <property type="gene ID" value="TraesKARUn01G0109320"/>
</dbReference>
<dbReference type="Gramene" id="TraesKARUn01G0109900.1">
    <property type="protein sequence ID" value="cds.TraesKARUn01G0109900.1"/>
    <property type="gene ID" value="TraesKARUn01G0109900"/>
</dbReference>
<dbReference type="Gramene" id="TraesKARUn01G0111310.1">
    <property type="protein sequence ID" value="cds.TraesKARUn01G0111310.1"/>
    <property type="gene ID" value="TraesKARUn01G0111310"/>
</dbReference>
<dbReference type="Gramene" id="TraesKARUn01G0121000.1">
    <property type="protein sequence ID" value="cds.TraesKARUn01G0121000.1"/>
    <property type="gene ID" value="TraesKARUn01G0121000"/>
</dbReference>
<dbReference type="Gramene" id="TraesKARUn01G0127660.1">
    <property type="protein sequence ID" value="cds.TraesKARUn01G0127660.1"/>
    <property type="gene ID" value="TraesKARUn01G0127660"/>
</dbReference>
<dbReference type="Gramene" id="TraesKARUn01G0136740.1">
    <property type="protein sequence ID" value="cds.TraesKARUn01G0136740.1"/>
    <property type="gene ID" value="TraesKARUn01G0136740"/>
</dbReference>
<dbReference type="Gramene" id="TraesKARUn01G0139280.1">
    <property type="protein sequence ID" value="cds.TraesKARUn01G0139280.1"/>
    <property type="gene ID" value="TraesKARUn01G0139280"/>
</dbReference>
<dbReference type="Gramene" id="TraesKARUn01G0139590.1">
    <property type="protein sequence ID" value="cds.TraesKARUn01G0139590.1"/>
    <property type="gene ID" value="TraesKARUn01G0139590"/>
</dbReference>
<dbReference type="Gramene" id="TraesKARUn01G0141330.1">
    <property type="protein sequence ID" value="cds.TraesKARUn01G0141330.1"/>
    <property type="gene ID" value="TraesKARUn01G0141330"/>
</dbReference>
<dbReference type="Gramene" id="TraesKARUn01G0144260.1">
    <property type="protein sequence ID" value="cds.TraesKARUn01G0144260.1"/>
    <property type="gene ID" value="TraesKARUn01G0144260"/>
</dbReference>
<dbReference type="Gramene" id="TraesKARUn01G0150480.1">
    <property type="protein sequence ID" value="cds.TraesKARUn01G0150480.1"/>
    <property type="gene ID" value="TraesKARUn01G0150480"/>
</dbReference>
<dbReference type="Gramene" id="TraesKARUn01G0155890.1">
    <property type="protein sequence ID" value="cds.TraesKARUn01G0155890.1"/>
    <property type="gene ID" value="TraesKARUn01G0155890"/>
</dbReference>
<dbReference type="Gramene" id="TraesKARUn01G0158060.1">
    <property type="protein sequence ID" value="cds.TraesKARUn01G0158060.1"/>
    <property type="gene ID" value="TraesKARUn01G0158060"/>
</dbReference>
<dbReference type="Gramene" id="TraesKARUn01G0194420.1">
    <property type="protein sequence ID" value="cds.TraesKARUn01G0194420.1"/>
    <property type="gene ID" value="TraesKARUn01G0194420"/>
</dbReference>
<dbReference type="Gramene" id="TraesPARA_EIv1.0_0377180.1">
    <property type="protein sequence ID" value="TraesPARA_EIv1.0_0377180.1.CDS1"/>
    <property type="gene ID" value="TraesPARA_EIv1.0_0377180"/>
</dbReference>
<dbReference type="Gramene" id="TraesPARA_EIv1.0_1811450.1">
    <property type="protein sequence ID" value="TraesPARA_EIv1.0_1811450.1.CDS1"/>
    <property type="gene ID" value="TraesPARA_EIv1.0_1811450"/>
</dbReference>
<dbReference type="Gramene" id="TraesPARA_EIv1.0_1811710.1">
    <property type="protein sequence ID" value="TraesPARA_EIv1.0_1811710.1.CDS1"/>
    <property type="gene ID" value="TraesPARA_EIv1.0_1811710"/>
</dbReference>
<dbReference type="Gramene" id="TraesPARA_EIv1.0_2333390.1">
    <property type="protein sequence ID" value="TraesPARA_EIv1.0_2333390.1.CDS1"/>
    <property type="gene ID" value="TraesPARA_EIv1.0_2333390"/>
</dbReference>
<dbReference type="Gramene" id="TraesPARA_EIv1.0_2673960.1">
    <property type="protein sequence ID" value="TraesPARA_EIv1.0_2673960.1.CDS1"/>
    <property type="gene ID" value="TraesPARA_EIv1.0_2673960"/>
</dbReference>
<dbReference type="Gramene" id="TraesPARA_EIv1.0_2678390.1">
    <property type="protein sequence ID" value="TraesPARA_EIv1.0_2678390.1.CDS1"/>
    <property type="gene ID" value="TraesPARA_EIv1.0_2678390"/>
</dbReference>
<dbReference type="Gramene" id="TraesRN5A0100807000.1">
    <property type="protein sequence ID" value="TraesRN5A0100807000.1"/>
    <property type="gene ID" value="TraesRN5A0100807000"/>
</dbReference>
<dbReference type="Gramene" id="TraesRN5A0100807100.1">
    <property type="protein sequence ID" value="TraesRN5A0100807100.1"/>
    <property type="gene ID" value="TraesRN5A0100807100"/>
</dbReference>
<dbReference type="eggNOG" id="KOG4769">
    <property type="taxonomic scope" value="Eukaryota"/>
</dbReference>
<dbReference type="HOGENOM" id="CLU_011899_7_3_1"/>
<dbReference type="OrthoDB" id="728657at2759"/>
<dbReference type="UniPathway" id="UPA00705"/>
<dbReference type="Proteomes" id="UP000019116">
    <property type="component" value="Unplaced"/>
</dbReference>
<dbReference type="GO" id="GO:0005743">
    <property type="term" value="C:mitochondrial inner membrane"/>
    <property type="evidence" value="ECO:0007669"/>
    <property type="project" value="UniProtKB-SubCell"/>
</dbReference>
<dbReference type="GO" id="GO:0045277">
    <property type="term" value="C:respiratory chain complex IV"/>
    <property type="evidence" value="ECO:0007669"/>
    <property type="project" value="InterPro"/>
</dbReference>
<dbReference type="GO" id="GO:0004129">
    <property type="term" value="F:cytochrome-c oxidase activity"/>
    <property type="evidence" value="ECO:0007669"/>
    <property type="project" value="UniProtKB-EC"/>
</dbReference>
<dbReference type="GO" id="GO:0020037">
    <property type="term" value="F:heme binding"/>
    <property type="evidence" value="ECO:0007669"/>
    <property type="project" value="InterPro"/>
</dbReference>
<dbReference type="GO" id="GO:0046872">
    <property type="term" value="F:metal ion binding"/>
    <property type="evidence" value="ECO:0007669"/>
    <property type="project" value="UniProtKB-KW"/>
</dbReference>
<dbReference type="GO" id="GO:0015990">
    <property type="term" value="P:electron transport coupled proton transport"/>
    <property type="evidence" value="ECO:0007669"/>
    <property type="project" value="InterPro"/>
</dbReference>
<dbReference type="GO" id="GO:0006119">
    <property type="term" value="P:oxidative phosphorylation"/>
    <property type="evidence" value="ECO:0007669"/>
    <property type="project" value="UniProtKB-UniPathway"/>
</dbReference>
<dbReference type="CDD" id="cd01663">
    <property type="entry name" value="Cyt_c_Oxidase_I"/>
    <property type="match status" value="1"/>
</dbReference>
<dbReference type="FunFam" id="1.20.210.10:FF:000001">
    <property type="entry name" value="Cytochrome c oxidase subunit 1"/>
    <property type="match status" value="1"/>
</dbReference>
<dbReference type="Gene3D" id="1.20.210.10">
    <property type="entry name" value="Cytochrome c oxidase-like, subunit I domain"/>
    <property type="match status" value="1"/>
</dbReference>
<dbReference type="InterPro" id="IPR023616">
    <property type="entry name" value="Cyt_c_oxase-like_su1_dom"/>
</dbReference>
<dbReference type="InterPro" id="IPR036927">
    <property type="entry name" value="Cyt_c_oxase-like_su1_sf"/>
</dbReference>
<dbReference type="InterPro" id="IPR000883">
    <property type="entry name" value="Cyt_C_Oxase_1"/>
</dbReference>
<dbReference type="InterPro" id="IPR023615">
    <property type="entry name" value="Cyt_c_Oxase_su1_BS"/>
</dbReference>
<dbReference type="InterPro" id="IPR033944">
    <property type="entry name" value="Cyt_c_oxase_su1_dom"/>
</dbReference>
<dbReference type="InterPro" id="IPR014241">
    <property type="entry name" value="Cyt_c_oxidase_su1_bac"/>
</dbReference>
<dbReference type="NCBIfam" id="TIGR02891">
    <property type="entry name" value="CtaD_CoxA"/>
    <property type="match status" value="1"/>
</dbReference>
<dbReference type="PANTHER" id="PTHR10422">
    <property type="entry name" value="CYTOCHROME C OXIDASE SUBUNIT 1"/>
    <property type="match status" value="1"/>
</dbReference>
<dbReference type="PANTHER" id="PTHR10422:SF45">
    <property type="entry name" value="CYTOCHROME C OXIDASE SUBUNIT 1"/>
    <property type="match status" value="1"/>
</dbReference>
<dbReference type="Pfam" id="PF00115">
    <property type="entry name" value="COX1"/>
    <property type="match status" value="1"/>
</dbReference>
<dbReference type="PRINTS" id="PR01165">
    <property type="entry name" value="CYCOXIDASEI"/>
</dbReference>
<dbReference type="SUPFAM" id="SSF81442">
    <property type="entry name" value="Cytochrome c oxidase subunit I-like"/>
    <property type="match status" value="1"/>
</dbReference>
<dbReference type="PROSITE" id="PS50855">
    <property type="entry name" value="COX1"/>
    <property type="match status" value="1"/>
</dbReference>
<dbReference type="PROSITE" id="PS00077">
    <property type="entry name" value="COX1_CUB"/>
    <property type="match status" value="1"/>
</dbReference>
<feature type="chain" id="PRO_0000183429" description="Cytochrome c oxidase subunit 1">
    <location>
        <begin position="1"/>
        <end position="524"/>
    </location>
</feature>
<feature type="transmembrane region" description="Helical" evidence="3">
    <location>
        <begin position="18"/>
        <end position="38"/>
    </location>
</feature>
<feature type="transmembrane region" description="Helical" evidence="3">
    <location>
        <begin position="66"/>
        <end position="86"/>
    </location>
</feature>
<feature type="transmembrane region" description="Helical" evidence="3">
    <location>
        <begin position="103"/>
        <end position="123"/>
    </location>
</feature>
<feature type="transmembrane region" description="Helical" evidence="3">
    <location>
        <begin position="148"/>
        <end position="168"/>
    </location>
</feature>
<feature type="transmembrane region" description="Helical" evidence="3">
    <location>
        <begin position="186"/>
        <end position="206"/>
    </location>
</feature>
<feature type="transmembrane region" description="Helical" evidence="3">
    <location>
        <begin position="237"/>
        <end position="257"/>
    </location>
</feature>
<feature type="transmembrane region" description="Helical" evidence="3">
    <location>
        <begin position="269"/>
        <end position="289"/>
    </location>
</feature>
<feature type="transmembrane region" description="Helical" evidence="3">
    <location>
        <begin position="312"/>
        <end position="332"/>
    </location>
</feature>
<feature type="transmembrane region" description="Helical" evidence="3">
    <location>
        <begin position="340"/>
        <end position="360"/>
    </location>
</feature>
<feature type="transmembrane region" description="Helical" evidence="3">
    <location>
        <begin position="379"/>
        <end position="399"/>
    </location>
</feature>
<feature type="transmembrane region" description="Helical" evidence="3">
    <location>
        <begin position="414"/>
        <end position="434"/>
    </location>
</feature>
<feature type="transmembrane region" description="Helical" evidence="3">
    <location>
        <begin position="447"/>
        <end position="467"/>
    </location>
</feature>
<feature type="binding site" evidence="2">
    <location>
        <position position="41"/>
    </location>
    <ligand>
        <name>Ca(2+)</name>
        <dbReference type="ChEBI" id="CHEBI:29108"/>
    </ligand>
</feature>
<feature type="binding site" evidence="2">
    <location>
        <position position="46"/>
    </location>
    <ligand>
        <name>Ca(2+)</name>
        <dbReference type="ChEBI" id="CHEBI:29108"/>
    </ligand>
</feature>
<feature type="binding site" description="axial binding residue" evidence="2">
    <location>
        <position position="64"/>
    </location>
    <ligand>
        <name>Fe(II)-heme a</name>
        <dbReference type="ChEBI" id="CHEBI:61715"/>
        <note>low-spin</note>
    </ligand>
    <ligandPart>
        <name>Fe</name>
        <dbReference type="ChEBI" id="CHEBI:18248"/>
    </ligandPart>
</feature>
<feature type="binding site" evidence="2">
    <location>
        <position position="243"/>
    </location>
    <ligand>
        <name>Cu cation</name>
        <dbReference type="ChEBI" id="CHEBI:23378"/>
        <label>B</label>
    </ligand>
</feature>
<feature type="binding site" evidence="1">
    <location>
        <position position="247"/>
    </location>
    <ligand>
        <name>O2</name>
        <dbReference type="ChEBI" id="CHEBI:15379"/>
    </ligand>
</feature>
<feature type="binding site" evidence="2">
    <location>
        <position position="292"/>
    </location>
    <ligand>
        <name>Cu cation</name>
        <dbReference type="ChEBI" id="CHEBI:23378"/>
        <label>B</label>
    </ligand>
</feature>
<feature type="binding site" evidence="2">
    <location>
        <position position="293"/>
    </location>
    <ligand>
        <name>Cu cation</name>
        <dbReference type="ChEBI" id="CHEBI:23378"/>
        <label>B</label>
    </ligand>
</feature>
<feature type="binding site" evidence="2">
    <location>
        <position position="370"/>
    </location>
    <ligand>
        <name>Mg(2+)</name>
        <dbReference type="ChEBI" id="CHEBI:18420"/>
        <note>ligand shared with subunit 2</note>
    </ligand>
</feature>
<feature type="binding site" evidence="2">
    <location>
        <position position="371"/>
    </location>
    <ligand>
        <name>Mg(2+)</name>
        <dbReference type="ChEBI" id="CHEBI:18420"/>
        <note>ligand shared with subunit 2</note>
    </ligand>
</feature>
<feature type="binding site" description="axial binding residue" evidence="2">
    <location>
        <position position="378"/>
    </location>
    <ligand>
        <name>heme a3</name>
        <dbReference type="ChEBI" id="CHEBI:83282"/>
        <note>high-spin</note>
    </ligand>
    <ligandPart>
        <name>Fe</name>
        <dbReference type="ChEBI" id="CHEBI:18248"/>
    </ligandPart>
</feature>
<feature type="binding site" description="axial binding residue" evidence="2">
    <location>
        <position position="380"/>
    </location>
    <ligand>
        <name>Fe(II)-heme a</name>
        <dbReference type="ChEBI" id="CHEBI:61715"/>
        <note>low-spin</note>
    </ligand>
    <ligandPart>
        <name>Fe</name>
        <dbReference type="ChEBI" id="CHEBI:18248"/>
    </ligandPart>
</feature>
<feature type="binding site" evidence="2">
    <location>
        <position position="443"/>
    </location>
    <ligand>
        <name>Ca(2+)</name>
        <dbReference type="ChEBI" id="CHEBI:29108"/>
    </ligand>
</feature>
<feature type="cross-link" description="1'-histidyl-3'-tyrosine (His-Tyr)" evidence="2">
    <location>
        <begin position="243"/>
        <end position="247"/>
    </location>
</feature>
<name>COX1_WHEAT</name>
<proteinExistence type="inferred from homology"/>
<keyword id="KW-0106">Calcium</keyword>
<keyword id="KW-0186">Copper</keyword>
<keyword id="KW-0249">Electron transport</keyword>
<keyword id="KW-0349">Heme</keyword>
<keyword id="KW-0408">Iron</keyword>
<keyword id="KW-0460">Magnesium</keyword>
<keyword id="KW-0472">Membrane</keyword>
<keyword id="KW-0479">Metal-binding</keyword>
<keyword id="KW-0496">Mitochondrion</keyword>
<keyword id="KW-0999">Mitochondrion inner membrane</keyword>
<keyword id="KW-1185">Reference proteome</keyword>
<keyword id="KW-0679">Respiratory chain</keyword>
<keyword id="KW-1278">Translocase</keyword>
<keyword id="KW-0812">Transmembrane</keyword>
<keyword id="KW-1133">Transmembrane helix</keyword>
<keyword id="KW-0813">Transport</keyword>
<organism>
    <name type="scientific">Triticum aestivum</name>
    <name type="common">Wheat</name>
    <dbReference type="NCBI Taxonomy" id="4565"/>
    <lineage>
        <taxon>Eukaryota</taxon>
        <taxon>Viridiplantae</taxon>
        <taxon>Streptophyta</taxon>
        <taxon>Embryophyta</taxon>
        <taxon>Tracheophyta</taxon>
        <taxon>Spermatophyta</taxon>
        <taxon>Magnoliopsida</taxon>
        <taxon>Liliopsida</taxon>
        <taxon>Poales</taxon>
        <taxon>Poaceae</taxon>
        <taxon>BOP clade</taxon>
        <taxon>Pooideae</taxon>
        <taxon>Triticodae</taxon>
        <taxon>Triticeae</taxon>
        <taxon>Triticinae</taxon>
        <taxon>Triticum</taxon>
    </lineage>
</organism>
<reference key="1">
    <citation type="journal article" date="1987" name="Nucleic Acids Res.">
        <title>Nucleotide sequence of the wheat mitochondrial gene for subunit I of cytochrome oxidase.</title>
        <authorList>
            <person name="Bonen L."/>
            <person name="Boer P.H."/>
            <person name="McIntosh J.E."/>
            <person name="Gray M.W."/>
        </authorList>
    </citation>
    <scope>NUCLEOTIDE SEQUENCE [GENOMIC DNA]</scope>
    <source>
        <strain>cv. Thatcher</strain>
    </source>
</reference>
<reference key="2">
    <citation type="journal article" date="1991" name="Plant Mol. Biol.">
        <title>A chimeric open reading frame in the 5' flanking region of coxI mitochondrial DNA from cytoplasmic male-sterile wheat.</title>
        <authorList>
            <person name="Rathburn H.B."/>
            <person name="Hedgcoth C."/>
        </authorList>
    </citation>
    <scope>NUCLEOTIDE SEQUENCE [GENOMIC DNA]</scope>
</reference>
<geneLocation type="mitochondrion"/>
<accession>P68539</accession>
<accession>P08741</accession>